<reference key="1">
    <citation type="journal article" date="1997" name="Nature">
        <title>Molecular basis of symbiosis between Rhizobium and legumes.</title>
        <authorList>
            <person name="Freiberg C.A."/>
            <person name="Fellay R."/>
            <person name="Bairoch A."/>
            <person name="Broughton W.J."/>
            <person name="Rosenthal A."/>
            <person name="Perret X."/>
        </authorList>
    </citation>
    <scope>NUCLEOTIDE SEQUENCE [LARGE SCALE GENOMIC DNA]</scope>
    <source>
        <strain>NBRC 101917 / NGR234</strain>
    </source>
</reference>
<reference key="2">
    <citation type="journal article" date="2009" name="Appl. Environ. Microbiol.">
        <title>Rhizobium sp. strain NGR234 possesses a remarkable number of secretion systems.</title>
        <authorList>
            <person name="Schmeisser C."/>
            <person name="Liesegang H."/>
            <person name="Krysciak D."/>
            <person name="Bakkou N."/>
            <person name="Le Quere A."/>
            <person name="Wollherr A."/>
            <person name="Heinemeyer I."/>
            <person name="Morgenstern B."/>
            <person name="Pommerening-Roeser A."/>
            <person name="Flores M."/>
            <person name="Palacios R."/>
            <person name="Brenner S."/>
            <person name="Gottschalk G."/>
            <person name="Schmitz R.A."/>
            <person name="Broughton W.J."/>
            <person name="Perret X."/>
            <person name="Strittmatter A.W."/>
            <person name="Streit W.R."/>
        </authorList>
    </citation>
    <scope>NUCLEOTIDE SEQUENCE [LARGE SCALE GENOMIC DNA]</scope>
    <source>
        <strain>NBRC 101917 / NGR234</strain>
    </source>
</reference>
<gene>
    <name type="ordered locus">NGR_a00910</name>
    <name type="ORF">y4wO</name>
</gene>
<keyword id="KW-0614">Plasmid</keyword>
<keyword id="KW-1185">Reference proteome</keyword>
<name>Y4WO_SINFN</name>
<accession>P55693</accession>
<geneLocation type="plasmid">
    <name>sym pNGR234a</name>
</geneLocation>
<proteinExistence type="predicted"/>
<organism>
    <name type="scientific">Sinorhizobium fredii (strain NBRC 101917 / NGR234)</name>
    <dbReference type="NCBI Taxonomy" id="394"/>
    <lineage>
        <taxon>Bacteria</taxon>
        <taxon>Pseudomonadati</taxon>
        <taxon>Pseudomonadota</taxon>
        <taxon>Alphaproteobacteria</taxon>
        <taxon>Hyphomicrobiales</taxon>
        <taxon>Rhizobiaceae</taxon>
        <taxon>Sinorhizobium/Ensifer group</taxon>
        <taxon>Sinorhizobium</taxon>
    </lineage>
</organism>
<sequence length="106" mass="11044">MAVPSCQTDGVRALKFVDHVGGEELGDNVRGVVLIACTTISMSPWPVTGMAGLVGSRTVSTSGVRICGLTATGTVIAHQLHMTVAAVGFRRIGLAGDRARPIWRIS</sequence>
<feature type="chain" id="PRO_0000200960" description="Uncharacterized protein y4wO">
    <location>
        <begin position="1"/>
        <end position="106"/>
    </location>
</feature>
<protein>
    <recommendedName>
        <fullName>Uncharacterized protein y4wO</fullName>
    </recommendedName>
</protein>
<dbReference type="EMBL" id="U00090">
    <property type="protein sequence ID" value="AAB91921.1"/>
    <property type="molecule type" value="Genomic_DNA"/>
</dbReference>
<dbReference type="RefSeq" id="NP_444134.1">
    <property type="nucleotide sequence ID" value="NC_000914.2"/>
</dbReference>
<dbReference type="KEGG" id="rhi:NGR_a00910"/>
<dbReference type="HOGENOM" id="CLU_2221090_0_0_5"/>
<dbReference type="OrthoDB" id="9875437at2"/>
<dbReference type="Proteomes" id="UP000001054">
    <property type="component" value="Plasmid pNGR234a"/>
</dbReference>